<evidence type="ECO:0000255" key="1"/>
<evidence type="ECO:0000256" key="2">
    <source>
        <dbReference type="SAM" id="MobiDB-lite"/>
    </source>
</evidence>
<evidence type="ECO:0000305" key="3"/>
<accession>Q5HH63</accession>
<gene>
    <name type="ordered locus">SACOL1028</name>
</gene>
<organism>
    <name type="scientific">Staphylococcus aureus (strain COL)</name>
    <dbReference type="NCBI Taxonomy" id="93062"/>
    <lineage>
        <taxon>Bacteria</taxon>
        <taxon>Bacillati</taxon>
        <taxon>Bacillota</taxon>
        <taxon>Bacilli</taxon>
        <taxon>Bacillales</taxon>
        <taxon>Staphylococcaceae</taxon>
        <taxon>Staphylococcus</taxon>
    </lineage>
</organism>
<sequence length="769" mass="86432">MDIGKKHVIPKSQYRRKRREFFHNEDREENLNQHQDKQNIDNTTSKKADKQIHKDSIDKHERFKNSLSSHLEQRNRDVNENKAEESKSNQDSKSAYNRDHYLTDDVSKKQNSLDSVDQDTEKSKYYEQNSEATLSTKSTDKVESTEMRKLSSDKNKVGHEEQHVLSKPSEHDKETRIDSESSRTDSDSSMQTEKIKKDSSDGNKSSNLKSEVISDKSNTVPKLSESDDEVNNQKPLTLPEEQKLKRQQSQNEQTKTYTYGDSEQNDKSNHENDLSHHIPSISDDKDNVMRENHIVDDNPDNDINTPSLSKTDDDRKLDEKIHVEDKHKQNADSSETVGYQSQSTASHRSTEKRNISINDHDKLNGQKTNTKTSANNNQKKATSKLNKGRATNNNYSDILKKFWMMYWPKLVILMGIIILIVILNAIFNNVNKNDRMNDNNDADAQKYTTTMKNANNTVKSVVTVENETSKDSSLPKDKASQDEVGSGVVYKKSGDTLYIVTNAHVVGDKENQKITFSNNKSVVGKVLGKDKWSDLAVVKATSSDSSVKEIAIGDSNNLVLGEPILVVGNPLGVDFKGTVTEGIISGLNRNVPIDFDKDNKYDMLMKAFQIDASVNPGNSGGAVVNREGKLIGVVAAKISMPNVENMSFAIPVNEVQKIVKDLETKGKIDYPDVGVKMKNIASLNSFERQAVKLPGKVKNGVVVDQVDNNGLADQSGLKKGDVITELDGKLLEDDLRFRQIIFSHKDDLKSITAKIYRDGKEKEINIKLK</sequence>
<name>HTRAL_STAAC</name>
<protein>
    <recommendedName>
        <fullName>Serine protease HtrA-like</fullName>
        <ecNumber>3.4.21.-</ecNumber>
    </recommendedName>
</protein>
<feature type="chain" id="PRO_0000252465" description="Serine protease HtrA-like">
    <location>
        <begin position="1"/>
        <end position="769"/>
    </location>
</feature>
<feature type="transmembrane region" description="Helical" evidence="1">
    <location>
        <begin position="410"/>
        <end position="430"/>
    </location>
</feature>
<feature type="domain" description="PDZ">
    <location>
        <begin position="680"/>
        <end position="733"/>
    </location>
</feature>
<feature type="region of interest" description="Disordered" evidence="2">
    <location>
        <begin position="1"/>
        <end position="390"/>
    </location>
</feature>
<feature type="compositionally biased region" description="Basic residues" evidence="2">
    <location>
        <begin position="1"/>
        <end position="20"/>
    </location>
</feature>
<feature type="compositionally biased region" description="Basic and acidic residues" evidence="2">
    <location>
        <begin position="21"/>
        <end position="64"/>
    </location>
</feature>
<feature type="compositionally biased region" description="Basic and acidic residues" evidence="2">
    <location>
        <begin position="71"/>
        <end position="108"/>
    </location>
</feature>
<feature type="compositionally biased region" description="Polar residues" evidence="2">
    <location>
        <begin position="126"/>
        <end position="137"/>
    </location>
</feature>
<feature type="compositionally biased region" description="Basic and acidic residues" evidence="2">
    <location>
        <begin position="138"/>
        <end position="186"/>
    </location>
</feature>
<feature type="compositionally biased region" description="Polar residues" evidence="2">
    <location>
        <begin position="247"/>
        <end position="262"/>
    </location>
</feature>
<feature type="compositionally biased region" description="Basic and acidic residues" evidence="2">
    <location>
        <begin position="264"/>
        <end position="296"/>
    </location>
</feature>
<feature type="compositionally biased region" description="Basic and acidic residues" evidence="2">
    <location>
        <begin position="310"/>
        <end position="330"/>
    </location>
</feature>
<feature type="compositionally biased region" description="Polar residues" evidence="2">
    <location>
        <begin position="331"/>
        <end position="347"/>
    </location>
</feature>
<feature type="compositionally biased region" description="Basic and acidic residues" evidence="2">
    <location>
        <begin position="348"/>
        <end position="364"/>
    </location>
</feature>
<feature type="compositionally biased region" description="Polar residues" evidence="2">
    <location>
        <begin position="365"/>
        <end position="390"/>
    </location>
</feature>
<feature type="active site" description="Charge relay system" evidence="1">
    <location>
        <position position="504"/>
    </location>
</feature>
<feature type="active site" description="Charge relay system" evidence="1">
    <location>
        <position position="534"/>
    </location>
</feature>
<feature type="active site" description="Charge relay system" evidence="1">
    <location>
        <position position="619"/>
    </location>
</feature>
<reference key="1">
    <citation type="journal article" date="2005" name="J. Bacteriol.">
        <title>Insights on evolution of virulence and resistance from the complete genome analysis of an early methicillin-resistant Staphylococcus aureus strain and a biofilm-producing methicillin-resistant Staphylococcus epidermidis strain.</title>
        <authorList>
            <person name="Gill S.R."/>
            <person name="Fouts D.E."/>
            <person name="Archer G.L."/>
            <person name="Mongodin E.F."/>
            <person name="DeBoy R.T."/>
            <person name="Ravel J."/>
            <person name="Paulsen I.T."/>
            <person name="Kolonay J.F."/>
            <person name="Brinkac L.M."/>
            <person name="Beanan M.J."/>
            <person name="Dodson R.J."/>
            <person name="Daugherty S.C."/>
            <person name="Madupu R."/>
            <person name="Angiuoli S.V."/>
            <person name="Durkin A.S."/>
            <person name="Haft D.H."/>
            <person name="Vamathevan J.J."/>
            <person name="Khouri H."/>
            <person name="Utterback T.R."/>
            <person name="Lee C."/>
            <person name="Dimitrov G."/>
            <person name="Jiang L."/>
            <person name="Qin H."/>
            <person name="Weidman J."/>
            <person name="Tran K."/>
            <person name="Kang K.H."/>
            <person name="Hance I.R."/>
            <person name="Nelson K.E."/>
            <person name="Fraser C.M."/>
        </authorList>
    </citation>
    <scope>NUCLEOTIDE SEQUENCE [LARGE SCALE GENOMIC DNA]</scope>
    <source>
        <strain>COL</strain>
    </source>
</reference>
<comment type="subcellular location">
    <subcellularLocation>
        <location evidence="3">Cell membrane</location>
        <topology evidence="3">Single-pass membrane protein</topology>
    </subcellularLocation>
</comment>
<comment type="similarity">
    <text evidence="3">Belongs to the peptidase S1C family.</text>
</comment>
<dbReference type="EC" id="3.4.21.-"/>
<dbReference type="EMBL" id="CP000046">
    <property type="protein sequence ID" value="AAW36494.1"/>
    <property type="molecule type" value="Genomic_DNA"/>
</dbReference>
<dbReference type="SMR" id="Q5HH63"/>
<dbReference type="KEGG" id="sac:SACOL1028"/>
<dbReference type="HOGENOM" id="CLU_027421_0_0_9"/>
<dbReference type="Proteomes" id="UP000000530">
    <property type="component" value="Chromosome"/>
</dbReference>
<dbReference type="GO" id="GO:0005886">
    <property type="term" value="C:plasma membrane"/>
    <property type="evidence" value="ECO:0007669"/>
    <property type="project" value="UniProtKB-SubCell"/>
</dbReference>
<dbReference type="GO" id="GO:0004252">
    <property type="term" value="F:serine-type endopeptidase activity"/>
    <property type="evidence" value="ECO:0007669"/>
    <property type="project" value="InterPro"/>
</dbReference>
<dbReference type="GO" id="GO:0006508">
    <property type="term" value="P:proteolysis"/>
    <property type="evidence" value="ECO:0007669"/>
    <property type="project" value="UniProtKB-KW"/>
</dbReference>
<dbReference type="CDD" id="cd06781">
    <property type="entry name" value="cpPDZ_BsHtra-like"/>
    <property type="match status" value="1"/>
</dbReference>
<dbReference type="Gene3D" id="2.30.42.10">
    <property type="match status" value="1"/>
</dbReference>
<dbReference type="Gene3D" id="2.40.10.10">
    <property type="entry name" value="Trypsin-like serine proteases"/>
    <property type="match status" value="2"/>
</dbReference>
<dbReference type="InterPro" id="IPR051201">
    <property type="entry name" value="Chloro_Bact_Ser_Proteases"/>
</dbReference>
<dbReference type="InterPro" id="IPR001478">
    <property type="entry name" value="PDZ"/>
</dbReference>
<dbReference type="InterPro" id="IPR036034">
    <property type="entry name" value="PDZ_sf"/>
</dbReference>
<dbReference type="InterPro" id="IPR009003">
    <property type="entry name" value="Peptidase_S1_PA"/>
</dbReference>
<dbReference type="InterPro" id="IPR043504">
    <property type="entry name" value="Peptidase_S1_PA_chymotrypsin"/>
</dbReference>
<dbReference type="InterPro" id="IPR001940">
    <property type="entry name" value="Peptidase_S1C"/>
</dbReference>
<dbReference type="PANTHER" id="PTHR43343">
    <property type="entry name" value="PEPTIDASE S12"/>
    <property type="match status" value="1"/>
</dbReference>
<dbReference type="PANTHER" id="PTHR43343:SF3">
    <property type="entry name" value="PROTEASE DO-LIKE 8, CHLOROPLASTIC"/>
    <property type="match status" value="1"/>
</dbReference>
<dbReference type="Pfam" id="PF13180">
    <property type="entry name" value="PDZ_2"/>
    <property type="match status" value="1"/>
</dbReference>
<dbReference type="Pfam" id="PF13365">
    <property type="entry name" value="Trypsin_2"/>
    <property type="match status" value="1"/>
</dbReference>
<dbReference type="PRINTS" id="PR00834">
    <property type="entry name" value="PROTEASES2C"/>
</dbReference>
<dbReference type="SMART" id="SM00228">
    <property type="entry name" value="PDZ"/>
    <property type="match status" value="1"/>
</dbReference>
<dbReference type="SUPFAM" id="SSF50156">
    <property type="entry name" value="PDZ domain-like"/>
    <property type="match status" value="1"/>
</dbReference>
<dbReference type="SUPFAM" id="SSF50494">
    <property type="entry name" value="Trypsin-like serine proteases"/>
    <property type="match status" value="1"/>
</dbReference>
<keyword id="KW-1003">Cell membrane</keyword>
<keyword id="KW-0378">Hydrolase</keyword>
<keyword id="KW-0472">Membrane</keyword>
<keyword id="KW-0645">Protease</keyword>
<keyword id="KW-0720">Serine protease</keyword>
<keyword id="KW-0812">Transmembrane</keyword>
<keyword id="KW-1133">Transmembrane helix</keyword>
<proteinExistence type="inferred from homology"/>